<proteinExistence type="evidence at protein level"/>
<name>I5P2_CAEEL</name>
<keyword id="KW-0963">Cytoplasm</keyword>
<keyword id="KW-0378">Hydrolase</keyword>
<keyword id="KW-1185">Reference proteome</keyword>
<dbReference type="EC" id="3.1.3.-"/>
<dbReference type="EMBL" id="FO080718">
    <property type="protein sequence ID" value="CCD66123.1"/>
    <property type="molecule type" value="Genomic_DNA"/>
</dbReference>
<dbReference type="PIR" id="S44627">
    <property type="entry name" value="S44627"/>
</dbReference>
<dbReference type="SMR" id="P34370"/>
<dbReference type="FunCoup" id="P34370">
    <property type="interactions" value="242"/>
</dbReference>
<dbReference type="STRING" id="6239.C50C3.7.1"/>
<dbReference type="PaxDb" id="6239-C50C3.7"/>
<dbReference type="PeptideAtlas" id="P34370"/>
<dbReference type="EnsemblMetazoa" id="C50C3.7.1">
    <property type="protein sequence ID" value="C50C3.7.1"/>
    <property type="gene ID" value="WBGene00086546"/>
</dbReference>
<dbReference type="KEGG" id="cel:CELE_C50C3.7"/>
<dbReference type="UCSC" id="C50C3.7">
    <property type="organism name" value="c. elegans"/>
</dbReference>
<dbReference type="AGR" id="WB:WBGene00086546"/>
<dbReference type="CTD" id="183643"/>
<dbReference type="WormBase" id="C50C3.7">
    <property type="protein sequence ID" value="CE00123"/>
    <property type="gene ID" value="WBGene00086546"/>
    <property type="gene designation" value="inpp-5K"/>
</dbReference>
<dbReference type="eggNOG" id="KOG0565">
    <property type="taxonomic scope" value="Eukaryota"/>
</dbReference>
<dbReference type="HOGENOM" id="CLU_730033_0_0_1"/>
<dbReference type="InParanoid" id="P34370"/>
<dbReference type="OMA" id="MYIILQE"/>
<dbReference type="OrthoDB" id="62798at2759"/>
<dbReference type="PhylomeDB" id="P34370"/>
<dbReference type="Reactome" id="R-CEL-1660499">
    <property type="pathway name" value="Synthesis of PIPs at the plasma membrane"/>
</dbReference>
<dbReference type="PRO" id="PR:P34370"/>
<dbReference type="Proteomes" id="UP000001940">
    <property type="component" value="Chromosome III"/>
</dbReference>
<dbReference type="Bgee" id="WBGene00086546">
    <property type="expression patterns" value="Expressed in adult organism and 4 other cell types or tissues"/>
</dbReference>
<dbReference type="GO" id="GO:0030424">
    <property type="term" value="C:axon"/>
    <property type="evidence" value="ECO:0000314"/>
    <property type="project" value="WormBase"/>
</dbReference>
<dbReference type="GO" id="GO:0005737">
    <property type="term" value="C:cytoplasm"/>
    <property type="evidence" value="ECO:0000314"/>
    <property type="project" value="UniProtKB"/>
</dbReference>
<dbReference type="GO" id="GO:0030425">
    <property type="term" value="C:dendrite"/>
    <property type="evidence" value="ECO:0000314"/>
    <property type="project" value="WormBase"/>
</dbReference>
<dbReference type="GO" id="GO:0016020">
    <property type="term" value="C:membrane"/>
    <property type="evidence" value="ECO:0000318"/>
    <property type="project" value="GO_Central"/>
</dbReference>
<dbReference type="GO" id="GO:0043025">
    <property type="term" value="C:neuronal cell body"/>
    <property type="evidence" value="ECO:0000314"/>
    <property type="project" value="WormBase"/>
</dbReference>
<dbReference type="GO" id="GO:0097730">
    <property type="term" value="C:non-motile cilium"/>
    <property type="evidence" value="ECO:0000314"/>
    <property type="project" value="WormBase"/>
</dbReference>
<dbReference type="GO" id="GO:0005634">
    <property type="term" value="C:nucleus"/>
    <property type="evidence" value="ECO:0000314"/>
    <property type="project" value="WormBase"/>
</dbReference>
<dbReference type="GO" id="GO:0098793">
    <property type="term" value="C:presynapse"/>
    <property type="evidence" value="ECO:0007669"/>
    <property type="project" value="GOC"/>
</dbReference>
<dbReference type="GO" id="GO:0052658">
    <property type="term" value="F:inositol-1,4,5-trisphosphate 5-phosphatase activity"/>
    <property type="evidence" value="ECO:0000318"/>
    <property type="project" value="GO_Central"/>
</dbReference>
<dbReference type="GO" id="GO:0052866">
    <property type="term" value="F:phosphatidylinositol phosphate phosphatase activity"/>
    <property type="evidence" value="ECO:0000315"/>
    <property type="project" value="GO_Central"/>
</dbReference>
<dbReference type="GO" id="GO:0004439">
    <property type="term" value="F:phosphatidylinositol-4,5-bisphosphate 5-phosphatase activity"/>
    <property type="evidence" value="ECO:0000318"/>
    <property type="project" value="GO_Central"/>
</dbReference>
<dbReference type="GO" id="GO:0009566">
    <property type="term" value="P:fertilization"/>
    <property type="evidence" value="ECO:0000305"/>
    <property type="project" value="UniProtKB"/>
</dbReference>
<dbReference type="GO" id="GO:0030317">
    <property type="term" value="P:flagellated sperm motility"/>
    <property type="evidence" value="ECO:0000315"/>
    <property type="project" value="UniProtKB"/>
</dbReference>
<dbReference type="GO" id="GO:0046856">
    <property type="term" value="P:phosphatidylinositol dephosphorylation"/>
    <property type="evidence" value="ECO:0007669"/>
    <property type="project" value="InterPro"/>
</dbReference>
<dbReference type="GO" id="GO:0046488">
    <property type="term" value="P:phosphatidylinositol metabolic process"/>
    <property type="evidence" value="ECO:0000304"/>
    <property type="project" value="UniProtKB"/>
</dbReference>
<dbReference type="GO" id="GO:0048488">
    <property type="term" value="P:synaptic vesicle endocytosis"/>
    <property type="evidence" value="ECO:0000318"/>
    <property type="project" value="GO_Central"/>
</dbReference>
<dbReference type="Gene3D" id="2.60.40.2840">
    <property type="match status" value="1"/>
</dbReference>
<dbReference type="Gene3D" id="3.60.10.10">
    <property type="entry name" value="Endonuclease/exonuclease/phosphatase"/>
    <property type="match status" value="1"/>
</dbReference>
<dbReference type="InterPro" id="IPR036691">
    <property type="entry name" value="Endo/exonu/phosph_ase_sf"/>
</dbReference>
<dbReference type="InterPro" id="IPR046985">
    <property type="entry name" value="IP5"/>
</dbReference>
<dbReference type="InterPro" id="IPR000300">
    <property type="entry name" value="IPPc"/>
</dbReference>
<dbReference type="InterPro" id="IPR041611">
    <property type="entry name" value="SKICH"/>
</dbReference>
<dbReference type="PANTHER" id="PTHR11200">
    <property type="entry name" value="INOSITOL 5-PHOSPHATASE"/>
    <property type="match status" value="1"/>
</dbReference>
<dbReference type="PANTHER" id="PTHR11200:SF295">
    <property type="entry name" value="INOSITOL POLYPHOSPHATE 5-PHOSPHATASE"/>
    <property type="match status" value="1"/>
</dbReference>
<dbReference type="Pfam" id="PF22669">
    <property type="entry name" value="Exo_endo_phos2"/>
    <property type="match status" value="1"/>
</dbReference>
<dbReference type="Pfam" id="PF17751">
    <property type="entry name" value="SKICH"/>
    <property type="match status" value="1"/>
</dbReference>
<dbReference type="SMART" id="SM00128">
    <property type="entry name" value="IPPc"/>
    <property type="match status" value="1"/>
</dbReference>
<dbReference type="SUPFAM" id="SSF56219">
    <property type="entry name" value="DNase I-like"/>
    <property type="match status" value="1"/>
</dbReference>
<protein>
    <recommendedName>
        <fullName>Inositol polyphosphate 5-phosphatase</fullName>
        <ecNumber>3.1.3.-</ecNumber>
    </recommendedName>
    <alternativeName>
        <fullName>Ciliary localization protein 1</fullName>
    </alternativeName>
</protein>
<reference key="1">
    <citation type="journal article" date="1994" name="Nature">
        <title>2.2 Mb of contiguous nucleotide sequence from chromosome III of C. elegans.</title>
        <authorList>
            <person name="Wilson R."/>
            <person name="Ainscough R."/>
            <person name="Anderson K."/>
            <person name="Baynes C."/>
            <person name="Berks M."/>
            <person name="Bonfield J."/>
            <person name="Burton J."/>
            <person name="Connell M."/>
            <person name="Copsey T."/>
            <person name="Cooper J."/>
            <person name="Coulson A."/>
            <person name="Craxton M."/>
            <person name="Dear S."/>
            <person name="Du Z."/>
            <person name="Durbin R."/>
            <person name="Favello A."/>
            <person name="Fraser A."/>
            <person name="Fulton L."/>
            <person name="Gardner A."/>
            <person name="Green P."/>
            <person name="Hawkins T."/>
            <person name="Hillier L."/>
            <person name="Jier M."/>
            <person name="Johnston L."/>
            <person name="Jones M."/>
            <person name="Kershaw J."/>
            <person name="Kirsten J."/>
            <person name="Laisster N."/>
            <person name="Latreille P."/>
            <person name="Lightning J."/>
            <person name="Lloyd C."/>
            <person name="Mortimore B."/>
            <person name="O'Callaghan M."/>
            <person name="Parsons J."/>
            <person name="Percy C."/>
            <person name="Rifken L."/>
            <person name="Roopra A."/>
            <person name="Saunders D."/>
            <person name="Shownkeen R."/>
            <person name="Sims M."/>
            <person name="Smaldon N."/>
            <person name="Smith A."/>
            <person name="Smith M."/>
            <person name="Sonnhammer E."/>
            <person name="Staden R."/>
            <person name="Sulston J."/>
            <person name="Thierry-Mieg J."/>
            <person name="Thomas K."/>
            <person name="Vaudin M."/>
            <person name="Vaughan K."/>
            <person name="Waterston R."/>
            <person name="Watson A."/>
            <person name="Weinstock L."/>
            <person name="Wilkinson-Sproat J."/>
            <person name="Wohldman P."/>
        </authorList>
    </citation>
    <scope>NUCLEOTIDE SEQUENCE [LARGE SCALE GENOMIC DNA]</scope>
    <source>
        <strain>Bristol N2</strain>
    </source>
</reference>
<reference key="2">
    <citation type="journal article" date="1998" name="Science">
        <title>Genome sequence of the nematode C. elegans: a platform for investigating biology.</title>
        <authorList>
            <consortium name="The C. elegans sequencing consortium"/>
        </authorList>
    </citation>
    <scope>NUCLEOTIDE SEQUENCE [LARGE SCALE GENOMIC DNA]</scope>
    <source>
        <strain>Bristol N2</strain>
    </source>
</reference>
<reference key="3">
    <citation type="journal article" date="2008" name="Dev. Dyn.">
        <title>Identification of genes involved in the ciliary trafficking of C. elegans PKD-2.</title>
        <authorList>
            <person name="Bae Y.K."/>
            <person name="Lyman-Gingerich J."/>
            <person name="Barr M.M."/>
            <person name="Knobel K.M."/>
        </authorList>
    </citation>
    <scope>DISRUPTION PHENOTYPE</scope>
</reference>
<reference key="4">
    <citation type="journal article" date="2009" name="Curr. Biol.">
        <title>The CIL-1 PI 5-phosphatase localizes TRP polycystins to cilia and activates sperm in C. elegans.</title>
        <authorList>
            <person name="Bae Y.K."/>
            <person name="Kim E."/>
            <person name="L'hernault S.W."/>
            <person name="Barr M.M."/>
        </authorList>
    </citation>
    <scope>FUNCTION</scope>
    <scope>SUBCELLULAR LOCATION</scope>
    <scope>TISSUE SPECIFICITY</scope>
    <scope>DISRUPTION PHENOTYPE</scope>
    <scope>MUTAGENESIS OF ASN-175</scope>
</reference>
<organism>
    <name type="scientific">Caenorhabditis elegans</name>
    <dbReference type="NCBI Taxonomy" id="6239"/>
    <lineage>
        <taxon>Eukaryota</taxon>
        <taxon>Metazoa</taxon>
        <taxon>Ecdysozoa</taxon>
        <taxon>Nematoda</taxon>
        <taxon>Chromadorea</taxon>
        <taxon>Rhabditida</taxon>
        <taxon>Rhabditina</taxon>
        <taxon>Rhabditomorpha</taxon>
        <taxon>Rhabditoidea</taxon>
        <taxon>Rhabditidae</taxon>
        <taxon>Peloderinae</taxon>
        <taxon>Caenorhabditis</taxon>
    </lineage>
</organism>
<gene>
    <name evidence="4" type="primary">inpp-5K</name>
    <name evidence="4" type="synonym">cil-1</name>
    <name evidence="4" type="ORF">C50C3.7</name>
</gene>
<feature type="chain" id="PRO_0000209746" description="Inositol polyphosphate 5-phosphatase">
    <location>
        <begin position="1"/>
        <end position="398"/>
    </location>
</feature>
<feature type="mutagenesis site" description="Loss of phosphatase activity." evidence="2">
    <original>N</original>
    <variation>A</variation>
    <location>
        <position position="175"/>
    </location>
</feature>
<evidence type="ECO:0000269" key="1">
    <source>
    </source>
</evidence>
<evidence type="ECO:0000269" key="2">
    <source>
    </source>
</evidence>
<evidence type="ECO:0000305" key="3"/>
<evidence type="ECO:0000312" key="4">
    <source>
        <dbReference type="WormBase" id="C50C3.7"/>
    </source>
</evidence>
<sequence length="398" mass="45206">MDWKITIFTYNLAMKASDSEAVHNMLNGMIDDHTHLVAIGLQEVAHSETIGGAVLTWATTIASWMNTNGRMVLLAKTFQATNQVLIFGRKQLIGQIKRIDYRFQRNTMGGLTGHKGSIGVRLQLASPYSIVFVDSHFIHGPENYGKRVEQYHTNRNCSFPEDKSVRAAFWFGDFNFRVEEDVNTVIRKIKNGTHLELLDTREQLKRALVERDAFIGFHEQPVTFEPTYRVTVGTTEQDGKRVPSWTDRILYKGDGITGLSYTNNKKAVASDHLPVVAMFRVTAPAAPKPQWEVIFEHLPTWYTSIPLVGRFQVNELYYKENGSYRDWIGVFPSSINDCTTATNWIYAATCFEQVIEGSKFLACEFNNIPAGNYRLGYFSCHLHCLVGLSKVFQIVEQP</sequence>
<comment type="function">
    <text evidence="2">Dephosphorylates a number of phosphatidylinositols. Controls the cellular levels and subcellular distribution of phosphatidylinositol 3,5-bisphosphate and phosphatidylinositol 3,4,5-trisphosphate. Has a role in sperm activation and motility. Influences the localization of the transient receptor potential polycystin (TRPP) complex proteins lov-1 and pkd-2.</text>
</comment>
<comment type="subcellular location">
    <subcellularLocation>
        <location evidence="2">Cytoplasm</location>
    </subcellularLocation>
    <text>Observed in reticular structures.</text>
</comment>
<comment type="tissue specificity">
    <text evidence="2">Expressed in tail, cilia, dendrites, axon and male head.</text>
</comment>
<comment type="disruption phenotype">
    <text evidence="1 2">Reduced mating efficiency. Defective sperm. Abnormal distribution of pkd-2.</text>
</comment>
<comment type="similarity">
    <text evidence="3">Belongs to the inositol 1,4,5-trisphosphate 5-phosphatase type II family.</text>
</comment>
<accession>P34370</accession>